<sequence>MTRHGKNCTAGAVYTYYEKKKDTAASGYGTQTVRLSKDAVKDFDCCCLSLQPCKDPVVTSDGYIYEKEAILEYILHQKKEIARQMKAYDKQKNAKKAEMDELNKAAKESQMKAFLDKEMTIVSKPLNPFTRKSDSGADTAEPSGSQQSSEEKGKQLPSFWIPSLTPEAKTSLVKKPDKTVYCPMSGKPLKMKDLIPVHFTAVDEKVDRVGLINRQDRYVCAVTRDMLGNSVPCAVLRPSGAVVTMECVEKLIKKDMIDPISGDKLHERDIIMLQRGGTGFSGSGVLLQAKEARPVMQA</sequence>
<organism>
    <name type="scientific">Xenopus tropicalis</name>
    <name type="common">Western clawed frog</name>
    <name type="synonym">Silurana tropicalis</name>
    <dbReference type="NCBI Taxonomy" id="8364"/>
    <lineage>
        <taxon>Eukaryota</taxon>
        <taxon>Metazoa</taxon>
        <taxon>Chordata</taxon>
        <taxon>Craniata</taxon>
        <taxon>Vertebrata</taxon>
        <taxon>Euteleostomi</taxon>
        <taxon>Amphibia</taxon>
        <taxon>Batrachia</taxon>
        <taxon>Anura</taxon>
        <taxon>Pipoidea</taxon>
        <taxon>Pipidae</taxon>
        <taxon>Xenopodinae</taxon>
        <taxon>Xenopus</taxon>
        <taxon>Silurana</taxon>
    </lineage>
</organism>
<proteinExistence type="evidence at transcript level"/>
<protein>
    <recommendedName>
        <fullName>Nitric oxide synthase-interacting protein</fullName>
    </recommendedName>
    <alternativeName>
        <fullName>E3 ubiquitin-protein ligase NOSIP</fullName>
        <ecNumber>2.3.2.27</ecNumber>
    </alternativeName>
    <alternativeName>
        <fullName evidence="5">RING-type E3 ubiquitin transferase NOSIP</fullName>
    </alternativeName>
</protein>
<keyword id="KW-0963">Cytoplasm</keyword>
<keyword id="KW-0217">Developmental protein</keyword>
<keyword id="KW-0539">Nucleus</keyword>
<keyword id="KW-1185">Reference proteome</keyword>
<keyword id="KW-0808">Transferase</keyword>
<keyword id="KW-0833">Ubl conjugation pathway</keyword>
<reference key="1">
    <citation type="submission" date="2003-11" db="EMBL/GenBank/DDBJ databases">
        <authorList>
            <consortium name="NIH - Xenopus Gene Collection (XGC) project"/>
        </authorList>
    </citation>
    <scope>NUCLEOTIDE SEQUENCE [LARGE SCALE MRNA]</scope>
    <source>
        <tissue>Embryo</tissue>
    </source>
</reference>
<accession>Q6P829</accession>
<feature type="chain" id="PRO_0000280590" description="Nitric oxide synthase-interacting protein">
    <location>
        <begin position="1"/>
        <end position="298"/>
    </location>
</feature>
<feature type="region of interest" description="Disordered" evidence="4">
    <location>
        <begin position="126"/>
        <end position="157"/>
    </location>
</feature>
<feature type="short sequence motif" description="Nuclear localization signal" evidence="1">
    <location>
        <begin position="78"/>
        <end position="101"/>
    </location>
</feature>
<evidence type="ECO:0000250" key="1"/>
<evidence type="ECO:0000250" key="2">
    <source>
        <dbReference type="UniProtKB" id="Q9D6T0"/>
    </source>
</evidence>
<evidence type="ECO:0000250" key="3">
    <source>
        <dbReference type="UniProtKB" id="Q9Y314"/>
    </source>
</evidence>
<evidence type="ECO:0000256" key="4">
    <source>
        <dbReference type="SAM" id="MobiDB-lite"/>
    </source>
</evidence>
<evidence type="ECO:0000305" key="5"/>
<name>NOSIP_XENTR</name>
<comment type="function">
    <text evidence="2 3">E3 ubiquitin-protein ligase that is essential for proper development of the forebrain, the eye, and the face (By similarity). Negatively regulates nitric oxide production by inducing nitric oxide synthase translocation to actin cytoskeleton and inhibiting its enzymatic activity (By similarity).</text>
</comment>
<comment type="catalytic activity">
    <reaction>
        <text>S-ubiquitinyl-[E2 ubiquitin-conjugating enzyme]-L-cysteine + [acceptor protein]-L-lysine = [E2 ubiquitin-conjugating enzyme]-L-cysteine + N(6)-ubiquitinyl-[acceptor protein]-L-lysine.</text>
        <dbReference type="EC" id="2.3.2.27"/>
    </reaction>
</comment>
<comment type="subcellular location">
    <subcellularLocation>
        <location evidence="3">Cytoplasm</location>
    </subcellularLocation>
    <subcellularLocation>
        <location evidence="3">Nucleus</location>
    </subcellularLocation>
    <text evidence="3">Translocates from nucleus to cytoplasm in the G2 phase of the cell cycle.</text>
</comment>
<comment type="similarity">
    <text evidence="5">Belongs to the NOSIP family.</text>
</comment>
<gene>
    <name type="primary">nosip</name>
</gene>
<dbReference type="EC" id="2.3.2.27"/>
<dbReference type="EMBL" id="BC061402">
    <property type="protein sequence ID" value="AAH61402.1"/>
    <property type="molecule type" value="mRNA"/>
</dbReference>
<dbReference type="RefSeq" id="NP_989029.1">
    <property type="nucleotide sequence ID" value="NM_203698.1"/>
</dbReference>
<dbReference type="RefSeq" id="XP_012812096.1">
    <property type="nucleotide sequence ID" value="XM_012956642.3"/>
</dbReference>
<dbReference type="SMR" id="Q6P829"/>
<dbReference type="FunCoup" id="Q6P829">
    <property type="interactions" value="3302"/>
</dbReference>
<dbReference type="STRING" id="8364.ENSXETP00000035744"/>
<dbReference type="DNASU" id="394625"/>
<dbReference type="GeneID" id="394625"/>
<dbReference type="KEGG" id="xtr:394625"/>
<dbReference type="AGR" id="Xenbase:XB-GENE-945889"/>
<dbReference type="CTD" id="51070"/>
<dbReference type="Xenbase" id="XB-GENE-945889">
    <property type="gene designation" value="nosip"/>
</dbReference>
<dbReference type="InParanoid" id="Q6P829"/>
<dbReference type="OMA" id="PCVTKFM"/>
<dbReference type="OrthoDB" id="116827at2759"/>
<dbReference type="Proteomes" id="UP000008143">
    <property type="component" value="Chromosome 7"/>
</dbReference>
<dbReference type="Bgee" id="ENSXETG00000017642">
    <property type="expression patterns" value="Expressed in 4-cell stage embryo and 19 other cell types or tissues"/>
</dbReference>
<dbReference type="ExpressionAtlas" id="Q6P829">
    <property type="expression patterns" value="differential"/>
</dbReference>
<dbReference type="GO" id="GO:0005737">
    <property type="term" value="C:cytoplasm"/>
    <property type="evidence" value="ECO:0007669"/>
    <property type="project" value="UniProtKB-SubCell"/>
</dbReference>
<dbReference type="GO" id="GO:0005634">
    <property type="term" value="C:nucleus"/>
    <property type="evidence" value="ECO:0007669"/>
    <property type="project" value="UniProtKB-SubCell"/>
</dbReference>
<dbReference type="GO" id="GO:0061630">
    <property type="term" value="F:ubiquitin protein ligase activity"/>
    <property type="evidence" value="ECO:0007669"/>
    <property type="project" value="InterPro"/>
</dbReference>
<dbReference type="CDD" id="cd16661">
    <property type="entry name" value="RING-Ubox1_NOSIP"/>
    <property type="match status" value="1"/>
</dbReference>
<dbReference type="CDD" id="cd16662">
    <property type="entry name" value="RING-Ubox2_NOSIP"/>
    <property type="match status" value="1"/>
</dbReference>
<dbReference type="FunFam" id="3.30.40.10:FF:000251">
    <property type="entry name" value="Nitric oxide synthase-interacting protein"/>
    <property type="match status" value="1"/>
</dbReference>
<dbReference type="FunFam" id="3.30.40.10:FF:001144">
    <property type="entry name" value="Nitric oxide synthase-interacting protein"/>
    <property type="match status" value="1"/>
</dbReference>
<dbReference type="Gene3D" id="3.30.40.10">
    <property type="entry name" value="Zinc/RING finger domain, C3HC4 (zinc finger)"/>
    <property type="match status" value="2"/>
</dbReference>
<dbReference type="InterPro" id="IPR016818">
    <property type="entry name" value="NOSIP"/>
</dbReference>
<dbReference type="InterPro" id="IPR031790">
    <property type="entry name" value="Znf-NOSIP"/>
</dbReference>
<dbReference type="InterPro" id="IPR013083">
    <property type="entry name" value="Znf_RING/FYVE/PHD"/>
</dbReference>
<dbReference type="PANTHER" id="PTHR13063">
    <property type="entry name" value="ENOS INTERACTING PROTEIN"/>
    <property type="match status" value="1"/>
</dbReference>
<dbReference type="PANTHER" id="PTHR13063:SF10">
    <property type="entry name" value="NITRIC OXIDE SYNTHASE-INTERACTING PROTEIN"/>
    <property type="match status" value="1"/>
</dbReference>
<dbReference type="Pfam" id="PF15906">
    <property type="entry name" value="zf-NOSIP"/>
    <property type="match status" value="1"/>
</dbReference>
<dbReference type="PIRSF" id="PIRSF023577">
    <property type="entry name" value="ENOS_interacting"/>
    <property type="match status" value="1"/>
</dbReference>
<dbReference type="SUPFAM" id="SSF57850">
    <property type="entry name" value="RING/U-box"/>
    <property type="match status" value="2"/>
</dbReference>